<proteinExistence type="evidence at transcript level"/>
<feature type="chain" id="PRO_0000214806" description="Inactive sodium-dependent neutral amino acid transporter B(0)AT3">
    <location>
        <begin position="1"/>
        <end position="628"/>
    </location>
</feature>
<feature type="topological domain" description="Cytoplasmic" evidence="1">
    <location>
        <begin position="1"/>
        <end position="26"/>
    </location>
</feature>
<feature type="transmembrane region" description="Helical; Name=1" evidence="1">
    <location>
        <begin position="27"/>
        <end position="47"/>
    </location>
</feature>
<feature type="topological domain" description="Extracellular" evidence="1">
    <location>
        <begin position="48"/>
        <end position="51"/>
    </location>
</feature>
<feature type="transmembrane region" description="Helical; Name=2" evidence="1">
    <location>
        <begin position="52"/>
        <end position="74"/>
    </location>
</feature>
<feature type="topological domain" description="Cytoplasmic" evidence="1">
    <location>
        <begin position="75"/>
        <end position="88"/>
    </location>
</feature>
<feature type="transmembrane region" description="Helical; Name=3" evidence="1">
    <location>
        <begin position="89"/>
        <end position="111"/>
    </location>
</feature>
<feature type="topological domain" description="Extracellular" evidence="1">
    <location>
        <begin position="112"/>
        <end position="178"/>
    </location>
</feature>
<feature type="transmembrane region" description="Helical; Name=4" evidence="1">
    <location>
        <begin position="179"/>
        <end position="201"/>
    </location>
</feature>
<feature type="topological domain" description="Cytoplasmic" evidence="1">
    <location>
        <begin position="202"/>
        <end position="207"/>
    </location>
</feature>
<feature type="transmembrane region" description="Helical; Name=5" evidence="1">
    <location>
        <begin position="208"/>
        <end position="230"/>
    </location>
</feature>
<feature type="topological domain" description="Extracellular" evidence="1">
    <location>
        <begin position="231"/>
        <end position="253"/>
    </location>
</feature>
<feature type="transmembrane region" description="Helical; Name=6" evidence="1">
    <location>
        <begin position="254"/>
        <end position="276"/>
    </location>
</feature>
<feature type="topological domain" description="Cytoplasmic" evidence="1">
    <location>
        <begin position="277"/>
        <end position="288"/>
    </location>
</feature>
<feature type="transmembrane region" description="Helical; Name=7" evidence="1">
    <location>
        <begin position="289"/>
        <end position="311"/>
    </location>
</feature>
<feature type="topological domain" description="Extracellular" evidence="1">
    <location>
        <begin position="312"/>
        <end position="399"/>
    </location>
</feature>
<feature type="transmembrane region" description="Helical; Name=8" evidence="1">
    <location>
        <begin position="400"/>
        <end position="422"/>
    </location>
</feature>
<feature type="topological domain" description="Cytoplasmic" evidence="1">
    <location>
        <begin position="423"/>
        <end position="442"/>
    </location>
</feature>
<feature type="transmembrane region" description="Helical; Name=9" evidence="1">
    <location>
        <begin position="443"/>
        <end position="465"/>
    </location>
</feature>
<feature type="topological domain" description="Extracellular" evidence="1">
    <location>
        <begin position="466"/>
        <end position="474"/>
    </location>
</feature>
<feature type="transmembrane region" description="Helical; Name=10" evidence="1">
    <location>
        <begin position="475"/>
        <end position="497"/>
    </location>
</feature>
<feature type="topological domain" description="Cytoplasmic" evidence="1">
    <location>
        <begin position="498"/>
        <end position="517"/>
    </location>
</feature>
<feature type="transmembrane region" description="Helical; Name=11" evidence="1">
    <location>
        <begin position="518"/>
        <end position="540"/>
    </location>
</feature>
<feature type="topological domain" description="Extracellular" evidence="1">
    <location>
        <begin position="541"/>
        <end position="568"/>
    </location>
</feature>
<feature type="transmembrane region" description="Helical; Name=12" evidence="1">
    <location>
        <begin position="569"/>
        <end position="591"/>
    </location>
</feature>
<feature type="topological domain" description="Cytoplasmic" evidence="1">
    <location>
        <begin position="592"/>
        <end position="628"/>
    </location>
</feature>
<feature type="region of interest" description="Disordered" evidence="2">
    <location>
        <begin position="602"/>
        <end position="628"/>
    </location>
</feature>
<feature type="glycosylation site" description="N-linked (GlcNAc...) asparagine" evidence="1">
    <location>
        <position position="144"/>
    </location>
</feature>
<feature type="glycosylation site" description="N-linked (GlcNAc...) asparagine" evidence="1">
    <location>
        <position position="168"/>
    </location>
</feature>
<feature type="glycosylation site" description="N-linked (GlcNAc...) asparagine" evidence="1">
    <location>
        <position position="174"/>
    </location>
</feature>
<feature type="glycosylation site" description="N-linked (GlcNAc...) asparagine" evidence="1">
    <location>
        <position position="354"/>
    </location>
</feature>
<feature type="sequence variant" id="VAR_057210" description="In dbSNP:rs34469326.">
    <original>A</original>
    <variation>D</variation>
    <location>
        <position position="4"/>
    </location>
</feature>
<feature type="sequence variant" id="VAR_027975" description="In dbSNP:rs7728667.">
    <original>C</original>
    <variation>S</variation>
    <location>
        <position position="12"/>
    </location>
</feature>
<feature type="sequence variant" id="VAR_027976" description="In dbSNP:rs7705355." evidence="3">
    <original>T</original>
    <variation>I</variation>
    <location>
        <position position="32"/>
    </location>
</feature>
<feature type="sequence variant" id="VAR_064796" description="In dbSNP:rs113861454." evidence="6">
    <original>G</original>
    <variation>S</variation>
    <location>
        <position position="79"/>
    </location>
</feature>
<feature type="sequence variant" id="VAR_027977" description="In dbSNP:rs4073918." evidence="3 6">
    <original>P</original>
    <variation>L</variation>
    <location>
        <position position="478"/>
    </location>
</feature>
<feature type="sequence variant" id="VAR_064797" description="In dbSNP:rs147278493." evidence="6">
    <original>G</original>
    <variation>R</variation>
    <location>
        <position position="496"/>
    </location>
</feature>
<accession>Q96N87</accession>
<comment type="function">
    <text evidence="7">Does not show neutral amino acid transporter activity.</text>
</comment>
<comment type="subcellular location">
    <subcellularLocation>
        <location evidence="8">Membrane</location>
        <topology evidence="1">Multi-pass membrane protein</topology>
    </subcellularLocation>
</comment>
<comment type="tissue specificity">
    <text evidence="4">Abundantly expressed in kidney, but not in intestine.</text>
</comment>
<comment type="polymorphism">
    <text evidence="5">Genetic variation in SLC6A18 is not a significant predictor for elevated systolic or diastolic blood pressure and is not associated with hypertension in the Japanese population (PubMed:16340170).</text>
</comment>
<comment type="disease">
    <text evidence="6">Genetic variations in SLC6A18 might contribute to the disease phentotype in some individuals with iminoglycinuria or hyperglycinuria, that carry variants in SLC36A2, SLC6A19 or SLC6A20 (PubMed:19033659).</text>
</comment>
<comment type="similarity">
    <text evidence="8">Belongs to the sodium:neurotransmitter symporter (SNF) (TC 2.A.22) family. SLC6A18 subfamily.</text>
</comment>
<comment type="caution">
    <text evidence="7">The mouse ortholog protein is an active neutral amino acid transporter.</text>
</comment>
<evidence type="ECO:0000255" key="1"/>
<evidence type="ECO:0000256" key="2">
    <source>
        <dbReference type="SAM" id="MobiDB-lite"/>
    </source>
</evidence>
<evidence type="ECO:0000269" key="3">
    <source>
    </source>
</evidence>
<evidence type="ECO:0000269" key="4">
    <source>
    </source>
</evidence>
<evidence type="ECO:0000269" key="5">
    <source>
    </source>
</evidence>
<evidence type="ECO:0000269" key="6">
    <source>
    </source>
</evidence>
<evidence type="ECO:0000269" key="7">
    <source>
    </source>
</evidence>
<evidence type="ECO:0000305" key="8"/>
<evidence type="ECO:0000312" key="9">
    <source>
        <dbReference type="HGNC" id="HGNC:26441"/>
    </source>
</evidence>
<sequence>MAHAPEPDPAACDLGDERPKWDNKAQYLLSCTGFAVGLGNIWRFPYLCQTYGGGAFLIPYVIALVFEGIPIFHVELAIGQRLRKGSVGVWTAISPYLSGVGLGCVTLSFLISLYYNTIVAWVLWYLLNSFQHPLPWSSCPPDLNRTGFVEECQGSSAVSYFWYRQTLNITADINDSGSIQWWLLICLAASWAVVYMCVIRGIETTGKVIYFTALFPYLVLTIFLIRGLTLPGATKGLIYLFTPNMHILQNPRVWLDAATQIFFSLSLAFGGHIAFASYNSPRNDCQKDAVVIALVNRMTSLYASIAVFSVLGFKATNDYEHCLDRNILSLINDFDFPEQSISRDDYPAVLMHLNATWPKRVAQLPLKACLLEDFLDKSASGPGLAFVVFTETDLHMPGAPVWAMLFFGMLFTLGLSTMFGTVEAVITPLLDVGVLPRWVPKEALTGLVCLVCFLSATCFTLQSGNYWLEIFDNFAASPNLLMLAFLEVVGVVYVYGMKRFCDDIAWMTGRRPSPYWRLTWRVVSPLLLTIFVAYIILLFWKPLRYKAWNPKYELFPSRQEKLYPGWARAACVLLSLLPVLWVPVAALAQLLTRRRRTWRDRDARPDTDMRPDTDTRPDTDMRPDTDMR</sequence>
<name>S6A18_HUMAN</name>
<dbReference type="EMBL" id="AK055798">
    <property type="protein sequence ID" value="BAB71018.1"/>
    <property type="molecule type" value="mRNA"/>
</dbReference>
<dbReference type="EMBL" id="AC114291">
    <property type="status" value="NOT_ANNOTATED_CDS"/>
    <property type="molecule type" value="Genomic_DNA"/>
</dbReference>
<dbReference type="EMBL" id="BC056757">
    <property type="protein sequence ID" value="AAH56757.1"/>
    <property type="molecule type" value="mRNA"/>
</dbReference>
<dbReference type="CCDS" id="CCDS3860.1"/>
<dbReference type="RefSeq" id="NP_872438.2">
    <property type="nucleotide sequence ID" value="NM_182632.3"/>
</dbReference>
<dbReference type="SMR" id="Q96N87"/>
<dbReference type="FunCoup" id="Q96N87">
    <property type="interactions" value="9"/>
</dbReference>
<dbReference type="STRING" id="9606.ENSP00000323549"/>
<dbReference type="TCDB" id="2.A.22.6.4">
    <property type="family name" value="the neurotransmitter:sodium symporter (nss) family"/>
</dbReference>
<dbReference type="GlyCosmos" id="Q96N87">
    <property type="glycosylation" value="4 sites, No reported glycans"/>
</dbReference>
<dbReference type="GlyGen" id="Q96N87">
    <property type="glycosylation" value="4 sites"/>
</dbReference>
<dbReference type="iPTMnet" id="Q96N87"/>
<dbReference type="PhosphoSitePlus" id="Q96N87"/>
<dbReference type="BioMuta" id="SLC6A18"/>
<dbReference type="DMDM" id="313104185"/>
<dbReference type="MassIVE" id="Q96N87"/>
<dbReference type="PaxDb" id="9606-ENSP00000323549"/>
<dbReference type="PeptideAtlas" id="Q96N87"/>
<dbReference type="Antibodypedia" id="1938">
    <property type="antibodies" value="73 antibodies from 23 providers"/>
</dbReference>
<dbReference type="DNASU" id="348932"/>
<dbReference type="Ensembl" id="ENST00000324642.4">
    <property type="protein sequence ID" value="ENSP00000323549.3"/>
    <property type="gene ID" value="ENSG00000164363.10"/>
</dbReference>
<dbReference type="GeneID" id="348932"/>
<dbReference type="KEGG" id="hsa:348932"/>
<dbReference type="MANE-Select" id="ENST00000324642.4">
    <property type="protein sequence ID" value="ENSP00000323549.3"/>
    <property type="RefSeq nucleotide sequence ID" value="NM_182632.3"/>
    <property type="RefSeq protein sequence ID" value="NP_872438.2"/>
</dbReference>
<dbReference type="UCSC" id="uc003jby.2">
    <property type="organism name" value="human"/>
</dbReference>
<dbReference type="AGR" id="HGNC:26441"/>
<dbReference type="CTD" id="348932"/>
<dbReference type="DisGeNET" id="348932"/>
<dbReference type="GeneCards" id="SLC6A18"/>
<dbReference type="HGNC" id="HGNC:26441">
    <property type="gene designation" value="SLC6A18"/>
</dbReference>
<dbReference type="HPA" id="ENSG00000164363">
    <property type="expression patterns" value="Tissue enriched (kidney)"/>
</dbReference>
<dbReference type="MalaCards" id="SLC6A18"/>
<dbReference type="MIM" id="610300">
    <property type="type" value="gene"/>
</dbReference>
<dbReference type="neXtProt" id="NX_Q96N87"/>
<dbReference type="OpenTargets" id="ENSG00000164363"/>
<dbReference type="Orphanet" id="42062">
    <property type="disease" value="Iminoglycinuria"/>
</dbReference>
<dbReference type="PharmGKB" id="PA134982449"/>
<dbReference type="VEuPathDB" id="HostDB:ENSG00000164363"/>
<dbReference type="eggNOG" id="KOG3659">
    <property type="taxonomic scope" value="Eukaryota"/>
</dbReference>
<dbReference type="GeneTree" id="ENSGT00940000158906"/>
<dbReference type="HOGENOM" id="CLU_006855_7_2_1"/>
<dbReference type="InParanoid" id="Q96N87"/>
<dbReference type="OMA" id="VLTWVMW"/>
<dbReference type="OrthoDB" id="6581954at2759"/>
<dbReference type="PAN-GO" id="Q96N87">
    <property type="GO annotations" value="2 GO annotations based on evolutionary models"/>
</dbReference>
<dbReference type="PhylomeDB" id="Q96N87"/>
<dbReference type="TreeFam" id="TF343812"/>
<dbReference type="PathwayCommons" id="Q96N87"/>
<dbReference type="Reactome" id="R-HSA-352230">
    <property type="pathway name" value="Amino acid transport across the plasma membrane"/>
</dbReference>
<dbReference type="Reactome" id="R-HSA-442660">
    <property type="pathway name" value="Na+/Cl- dependent neurotransmitter transporters"/>
</dbReference>
<dbReference type="Reactome" id="R-HSA-5619079">
    <property type="pathway name" value="Defective SLC6A18 may confer susceptibility to iminoglycinuria and/or hyperglycinuria"/>
</dbReference>
<dbReference type="Reactome" id="R-HSA-5659729">
    <property type="pathway name" value="Defective SLC6A18 may confer susceptibility to iminoglycinuria and/or hyperglycinuria"/>
</dbReference>
<dbReference type="SignaLink" id="Q96N87"/>
<dbReference type="BioGRID-ORCS" id="348932">
    <property type="hits" value="16 hits in 1139 CRISPR screens"/>
</dbReference>
<dbReference type="GeneWiki" id="SLC6A18"/>
<dbReference type="GenomeRNAi" id="348932"/>
<dbReference type="Pharos" id="Q96N87">
    <property type="development level" value="Tbio"/>
</dbReference>
<dbReference type="PRO" id="PR:Q96N87"/>
<dbReference type="Proteomes" id="UP000005640">
    <property type="component" value="Chromosome 5"/>
</dbReference>
<dbReference type="RNAct" id="Q96N87">
    <property type="molecule type" value="protein"/>
</dbReference>
<dbReference type="Bgee" id="ENSG00000164363">
    <property type="expression patterns" value="Expressed in adult mammalian kidney and 13 other cell types or tissues"/>
</dbReference>
<dbReference type="GO" id="GO:0016324">
    <property type="term" value="C:apical plasma membrane"/>
    <property type="evidence" value="ECO:0000250"/>
    <property type="project" value="UniProtKB"/>
</dbReference>
<dbReference type="GO" id="GO:0031526">
    <property type="term" value="C:brush border membrane"/>
    <property type="evidence" value="ECO:0007669"/>
    <property type="project" value="Ensembl"/>
</dbReference>
<dbReference type="GO" id="GO:0005886">
    <property type="term" value="C:plasma membrane"/>
    <property type="evidence" value="ECO:0000250"/>
    <property type="project" value="UniProtKB"/>
</dbReference>
<dbReference type="GO" id="GO:0015171">
    <property type="term" value="F:amino acid transmembrane transporter activity"/>
    <property type="evidence" value="ECO:0000304"/>
    <property type="project" value="Reactome"/>
</dbReference>
<dbReference type="GO" id="GO:0140931">
    <property type="term" value="F:neutral L-amino acid:sodium:chloride symporter activity"/>
    <property type="evidence" value="ECO:0000250"/>
    <property type="project" value="UniProtKB"/>
</dbReference>
<dbReference type="GO" id="GO:0006865">
    <property type="term" value="P:amino acid transport"/>
    <property type="evidence" value="ECO:0000304"/>
    <property type="project" value="Reactome"/>
</dbReference>
<dbReference type="GO" id="GO:0006836">
    <property type="term" value="P:neurotransmitter transport"/>
    <property type="evidence" value="ECO:0007669"/>
    <property type="project" value="UniProtKB-KW"/>
</dbReference>
<dbReference type="GO" id="GO:0015804">
    <property type="term" value="P:neutral amino acid transport"/>
    <property type="evidence" value="ECO:0000250"/>
    <property type="project" value="UniProtKB"/>
</dbReference>
<dbReference type="GO" id="GO:1990297">
    <property type="term" value="P:renal amino acid absorption"/>
    <property type="evidence" value="ECO:0000250"/>
    <property type="project" value="UniProtKB"/>
</dbReference>
<dbReference type="GO" id="GO:0035725">
    <property type="term" value="P:sodium ion transmembrane transport"/>
    <property type="evidence" value="ECO:0000318"/>
    <property type="project" value="GO_Central"/>
</dbReference>
<dbReference type="CDD" id="cd11517">
    <property type="entry name" value="SLC6sbd_B0AT3"/>
    <property type="match status" value="1"/>
</dbReference>
<dbReference type="InterPro" id="IPR042701">
    <property type="entry name" value="B0AT3_SLC6sbd"/>
</dbReference>
<dbReference type="InterPro" id="IPR000175">
    <property type="entry name" value="Na/ntran_symport"/>
</dbReference>
<dbReference type="InterPro" id="IPR002438">
    <property type="entry name" value="Neutral_aa_SLC6"/>
</dbReference>
<dbReference type="InterPro" id="IPR037272">
    <property type="entry name" value="SNS_sf"/>
</dbReference>
<dbReference type="NCBIfam" id="NF037979">
    <property type="entry name" value="Na_transp"/>
    <property type="match status" value="1"/>
</dbReference>
<dbReference type="PANTHER" id="PTHR11616:SF109">
    <property type="entry name" value="INACTIVE SODIUM-DEPENDENT NEUTRAL AMINO ACID TRANSPORTER B(0)AT3"/>
    <property type="match status" value="1"/>
</dbReference>
<dbReference type="PANTHER" id="PTHR11616">
    <property type="entry name" value="SODIUM/CHLORIDE DEPENDENT TRANSPORTER"/>
    <property type="match status" value="1"/>
</dbReference>
<dbReference type="Pfam" id="PF00209">
    <property type="entry name" value="SNF"/>
    <property type="match status" value="1"/>
</dbReference>
<dbReference type="PRINTS" id="PR00176">
    <property type="entry name" value="NANEUSMPORT"/>
</dbReference>
<dbReference type="PRINTS" id="PR01206">
    <property type="entry name" value="ORPHTRNSPORT"/>
</dbReference>
<dbReference type="SUPFAM" id="SSF161070">
    <property type="entry name" value="SNF-like"/>
    <property type="match status" value="1"/>
</dbReference>
<dbReference type="PROSITE" id="PS00610">
    <property type="entry name" value="NA_NEUROTRAN_SYMP_1"/>
    <property type="match status" value="1"/>
</dbReference>
<dbReference type="PROSITE" id="PS00754">
    <property type="entry name" value="NA_NEUROTRAN_SYMP_2"/>
    <property type="match status" value="1"/>
</dbReference>
<dbReference type="PROSITE" id="PS50267">
    <property type="entry name" value="NA_NEUROTRAN_SYMP_3"/>
    <property type="match status" value="1"/>
</dbReference>
<organism>
    <name type="scientific">Homo sapiens</name>
    <name type="common">Human</name>
    <dbReference type="NCBI Taxonomy" id="9606"/>
    <lineage>
        <taxon>Eukaryota</taxon>
        <taxon>Metazoa</taxon>
        <taxon>Chordata</taxon>
        <taxon>Craniata</taxon>
        <taxon>Vertebrata</taxon>
        <taxon>Euteleostomi</taxon>
        <taxon>Mammalia</taxon>
        <taxon>Eutheria</taxon>
        <taxon>Euarchontoglires</taxon>
        <taxon>Primates</taxon>
        <taxon>Haplorrhini</taxon>
        <taxon>Catarrhini</taxon>
        <taxon>Hominidae</taxon>
        <taxon>Homo</taxon>
    </lineage>
</organism>
<reference key="1">
    <citation type="journal article" date="2004" name="Nat. Genet.">
        <title>Complete sequencing and characterization of 21,243 full-length human cDNAs.</title>
        <authorList>
            <person name="Ota T."/>
            <person name="Suzuki Y."/>
            <person name="Nishikawa T."/>
            <person name="Otsuki T."/>
            <person name="Sugiyama T."/>
            <person name="Irie R."/>
            <person name="Wakamatsu A."/>
            <person name="Hayashi K."/>
            <person name="Sato H."/>
            <person name="Nagai K."/>
            <person name="Kimura K."/>
            <person name="Makita H."/>
            <person name="Sekine M."/>
            <person name="Obayashi M."/>
            <person name="Nishi T."/>
            <person name="Shibahara T."/>
            <person name="Tanaka T."/>
            <person name="Ishii S."/>
            <person name="Yamamoto J."/>
            <person name="Saito K."/>
            <person name="Kawai Y."/>
            <person name="Isono Y."/>
            <person name="Nakamura Y."/>
            <person name="Nagahari K."/>
            <person name="Murakami K."/>
            <person name="Yasuda T."/>
            <person name="Iwayanagi T."/>
            <person name="Wagatsuma M."/>
            <person name="Shiratori A."/>
            <person name="Sudo H."/>
            <person name="Hosoiri T."/>
            <person name="Kaku Y."/>
            <person name="Kodaira H."/>
            <person name="Kondo H."/>
            <person name="Sugawara M."/>
            <person name="Takahashi M."/>
            <person name="Kanda K."/>
            <person name="Yokoi T."/>
            <person name="Furuya T."/>
            <person name="Kikkawa E."/>
            <person name="Omura Y."/>
            <person name="Abe K."/>
            <person name="Kamihara K."/>
            <person name="Katsuta N."/>
            <person name="Sato K."/>
            <person name="Tanikawa M."/>
            <person name="Yamazaki M."/>
            <person name="Ninomiya K."/>
            <person name="Ishibashi T."/>
            <person name="Yamashita H."/>
            <person name="Murakawa K."/>
            <person name="Fujimori K."/>
            <person name="Tanai H."/>
            <person name="Kimata M."/>
            <person name="Watanabe M."/>
            <person name="Hiraoka S."/>
            <person name="Chiba Y."/>
            <person name="Ishida S."/>
            <person name="Ono Y."/>
            <person name="Takiguchi S."/>
            <person name="Watanabe S."/>
            <person name="Yosida M."/>
            <person name="Hotuta T."/>
            <person name="Kusano J."/>
            <person name="Kanehori K."/>
            <person name="Takahashi-Fujii A."/>
            <person name="Hara H."/>
            <person name="Tanase T.-O."/>
            <person name="Nomura Y."/>
            <person name="Togiya S."/>
            <person name="Komai F."/>
            <person name="Hara R."/>
            <person name="Takeuchi K."/>
            <person name="Arita M."/>
            <person name="Imose N."/>
            <person name="Musashino K."/>
            <person name="Yuuki H."/>
            <person name="Oshima A."/>
            <person name="Sasaki N."/>
            <person name="Aotsuka S."/>
            <person name="Yoshikawa Y."/>
            <person name="Matsunawa H."/>
            <person name="Ichihara T."/>
            <person name="Shiohata N."/>
            <person name="Sano S."/>
            <person name="Moriya S."/>
            <person name="Momiyama H."/>
            <person name="Satoh N."/>
            <person name="Takami S."/>
            <person name="Terashima Y."/>
            <person name="Suzuki O."/>
            <person name="Nakagawa S."/>
            <person name="Senoh A."/>
            <person name="Mizoguchi H."/>
            <person name="Goto Y."/>
            <person name="Shimizu F."/>
            <person name="Wakebe H."/>
            <person name="Hishigaki H."/>
            <person name="Watanabe T."/>
            <person name="Sugiyama A."/>
            <person name="Takemoto M."/>
            <person name="Kawakami B."/>
            <person name="Yamazaki M."/>
            <person name="Watanabe K."/>
            <person name="Kumagai A."/>
            <person name="Itakura S."/>
            <person name="Fukuzumi Y."/>
            <person name="Fujimori Y."/>
            <person name="Komiyama M."/>
            <person name="Tashiro H."/>
            <person name="Tanigami A."/>
            <person name="Fujiwara T."/>
            <person name="Ono T."/>
            <person name="Yamada K."/>
            <person name="Fujii Y."/>
            <person name="Ozaki K."/>
            <person name="Hirao M."/>
            <person name="Ohmori Y."/>
            <person name="Kawabata A."/>
            <person name="Hikiji T."/>
            <person name="Kobatake N."/>
            <person name="Inagaki H."/>
            <person name="Ikema Y."/>
            <person name="Okamoto S."/>
            <person name="Okitani R."/>
            <person name="Kawakami T."/>
            <person name="Noguchi S."/>
            <person name="Itoh T."/>
            <person name="Shigeta K."/>
            <person name="Senba T."/>
            <person name="Matsumura K."/>
            <person name="Nakajima Y."/>
            <person name="Mizuno T."/>
            <person name="Morinaga M."/>
            <person name="Sasaki M."/>
            <person name="Togashi T."/>
            <person name="Oyama M."/>
            <person name="Hata H."/>
            <person name="Watanabe M."/>
            <person name="Komatsu T."/>
            <person name="Mizushima-Sugano J."/>
            <person name="Satoh T."/>
            <person name="Shirai Y."/>
            <person name="Takahashi Y."/>
            <person name="Nakagawa K."/>
            <person name="Okumura K."/>
            <person name="Nagase T."/>
            <person name="Nomura N."/>
            <person name="Kikuchi H."/>
            <person name="Masuho Y."/>
            <person name="Yamashita R."/>
            <person name="Nakai K."/>
            <person name="Yada T."/>
            <person name="Nakamura Y."/>
            <person name="Ohara O."/>
            <person name="Isogai T."/>
            <person name="Sugano S."/>
        </authorList>
    </citation>
    <scope>NUCLEOTIDE SEQUENCE [LARGE SCALE MRNA]</scope>
    <scope>VARIANTS ILE-32 AND LEU-478</scope>
    <source>
        <tissue>Kidney</tissue>
    </source>
</reference>
<reference key="2">
    <citation type="journal article" date="2004" name="Nature">
        <title>The DNA sequence and comparative analysis of human chromosome 5.</title>
        <authorList>
            <person name="Schmutz J."/>
            <person name="Martin J."/>
            <person name="Terry A."/>
            <person name="Couronne O."/>
            <person name="Grimwood J."/>
            <person name="Lowry S."/>
            <person name="Gordon L.A."/>
            <person name="Scott D."/>
            <person name="Xie G."/>
            <person name="Huang W."/>
            <person name="Hellsten U."/>
            <person name="Tran-Gyamfi M."/>
            <person name="She X."/>
            <person name="Prabhakar S."/>
            <person name="Aerts A."/>
            <person name="Altherr M."/>
            <person name="Bajorek E."/>
            <person name="Black S."/>
            <person name="Branscomb E."/>
            <person name="Caoile C."/>
            <person name="Challacombe J.F."/>
            <person name="Chan Y.M."/>
            <person name="Denys M."/>
            <person name="Detter J.C."/>
            <person name="Escobar J."/>
            <person name="Flowers D."/>
            <person name="Fotopulos D."/>
            <person name="Glavina T."/>
            <person name="Gomez M."/>
            <person name="Gonzales E."/>
            <person name="Goodstein D."/>
            <person name="Grigoriev I."/>
            <person name="Groza M."/>
            <person name="Hammon N."/>
            <person name="Hawkins T."/>
            <person name="Haydu L."/>
            <person name="Israni S."/>
            <person name="Jett J."/>
            <person name="Kadner K."/>
            <person name="Kimball H."/>
            <person name="Kobayashi A."/>
            <person name="Lopez F."/>
            <person name="Lou Y."/>
            <person name="Martinez D."/>
            <person name="Medina C."/>
            <person name="Morgan J."/>
            <person name="Nandkeshwar R."/>
            <person name="Noonan J.P."/>
            <person name="Pitluck S."/>
            <person name="Pollard M."/>
            <person name="Predki P."/>
            <person name="Priest J."/>
            <person name="Ramirez L."/>
            <person name="Retterer J."/>
            <person name="Rodriguez A."/>
            <person name="Rogers S."/>
            <person name="Salamov A."/>
            <person name="Salazar A."/>
            <person name="Thayer N."/>
            <person name="Tice H."/>
            <person name="Tsai M."/>
            <person name="Ustaszewska A."/>
            <person name="Vo N."/>
            <person name="Wheeler J."/>
            <person name="Wu K."/>
            <person name="Yang J."/>
            <person name="Dickson M."/>
            <person name="Cheng J.-F."/>
            <person name="Eichler E.E."/>
            <person name="Olsen A."/>
            <person name="Pennacchio L.A."/>
            <person name="Rokhsar D.S."/>
            <person name="Richardson P."/>
            <person name="Lucas S.M."/>
            <person name="Myers R.M."/>
            <person name="Rubin E.M."/>
        </authorList>
    </citation>
    <scope>NUCLEOTIDE SEQUENCE [LARGE SCALE GENOMIC DNA]</scope>
</reference>
<reference key="3">
    <citation type="journal article" date="2004" name="Genome Res.">
        <title>The status, quality, and expansion of the NIH full-length cDNA project: the Mammalian Gene Collection (MGC).</title>
        <authorList>
            <consortium name="The MGC Project Team"/>
        </authorList>
    </citation>
    <scope>NUCLEOTIDE SEQUENCE [LARGE SCALE MRNA]</scope>
    <source>
        <tissue>Colon</tissue>
    </source>
</reference>
<reference key="4">
    <citation type="journal article" date="2004" name="Nat. Genet.">
        <title>Mutations in SLC6A19, encoding B(0)AT1, cause Hartnup disorder.</title>
        <authorList>
            <person name="Kleta R."/>
            <person name="Romeo E."/>
            <person name="Ristic Z."/>
            <person name="Ohura T."/>
            <person name="Stuart C."/>
            <person name="Arcos-Burgos M."/>
            <person name="Dave M.H."/>
            <person name="Wagner C.A."/>
            <person name="Camargo S.R.M."/>
            <person name="Inoue S."/>
            <person name="Matsuura N."/>
            <person name="Helip-Wooley A."/>
            <person name="Bockenhauer D."/>
            <person name="Warth R."/>
            <person name="Bernardini I."/>
            <person name="Visser G."/>
            <person name="Eggermann T."/>
            <person name="Lee P."/>
            <person name="Chairoungdua A."/>
            <person name="Jutabha P."/>
            <person name="Babu E."/>
            <person name="Nilwarangkoon S."/>
            <person name="Anzai N."/>
            <person name="Kanai Y."/>
            <person name="Verrey F."/>
            <person name="Gahl W.A."/>
            <person name="Koizumi A."/>
        </authorList>
    </citation>
    <scope>TISSUE SPECIFICITY</scope>
</reference>
<reference key="5">
    <citation type="journal article" date="2006" name="Tohoku J. Exp. Med.">
        <title>A nonsense polymorphism (Y319X) of the solute carrier family 6 member 18 (SLC6A18) gene is not associated with hypertension and blood pressure in Japanese.</title>
        <authorList>
            <person name="Eslami B."/>
            <person name="Kinboshi M."/>
            <person name="Inoue S."/>
            <person name="Harada K."/>
            <person name="Inoue K."/>
            <person name="Koizumi A."/>
        </authorList>
    </citation>
    <scope>POLYMORPHISM</scope>
    <scope>LACK OF ASSOCIATION WITH HYPERTENSION</scope>
</reference>
<reference key="6">
    <citation type="journal article" date="2015" name="J. Biol. Chem.">
        <title>Molecular basis for the interaction of the mammalian amino acid transporters B0AT1 and B0AT3 with their ancillary protein collectrin.</title>
        <authorList>
            <person name="Fairweather S.J."/>
            <person name="Broeer A."/>
            <person name="Subramanian N."/>
            <person name="Tumer E."/>
            <person name="Cheng Q."/>
            <person name="Schmoll D."/>
            <person name="O'Mara M.L."/>
            <person name="Broeer S."/>
        </authorList>
    </citation>
    <scope>LACK OF AMINO ACID TRANSPORTER ACTIVITY</scope>
</reference>
<reference key="7">
    <citation type="journal article" date="2008" name="J. Clin. Invest.">
        <title>Iminoglycinuria and hyperglycinuria are discrete human phenotypes resulting from complex mutations in proline and glycine transporters.</title>
        <authorList>
            <person name="Broer S."/>
            <person name="Bailey C.G."/>
            <person name="Kowalczuk S."/>
            <person name="Ng C."/>
            <person name="Vanslambrouck J.M."/>
            <person name="Rodgers H."/>
            <person name="Auray-Blais C."/>
            <person name="Cavanaugh J.A."/>
            <person name="Broer A."/>
            <person name="Rasko J.E."/>
        </authorList>
    </citation>
    <scope>VARIANTS SER-79; LEU-478 AND ARG-496</scope>
    <scope>POSSIBLE INVOLVEMENT IN HG AND IG</scope>
</reference>
<gene>
    <name evidence="9" type="primary">SLC6A18</name>
    <name type="synonym">B0AT3</name>
    <name type="synonym">XTRP2</name>
</gene>
<keyword id="KW-0029">Amino-acid transport</keyword>
<keyword id="KW-0325">Glycoprotein</keyword>
<keyword id="KW-0472">Membrane</keyword>
<keyword id="KW-0532">Neurotransmitter transport</keyword>
<keyword id="KW-1185">Reference proteome</keyword>
<keyword id="KW-0769">Symport</keyword>
<keyword id="KW-0812">Transmembrane</keyword>
<keyword id="KW-1133">Transmembrane helix</keyword>
<keyword id="KW-0813">Transport</keyword>
<protein>
    <recommendedName>
        <fullName>Inactive sodium-dependent neutral amino acid transporter B(0)AT3</fullName>
    </recommendedName>
    <alternativeName>
        <fullName evidence="8">Sodium- and chloride-dependent transporter XTRP2</fullName>
    </alternativeName>
    <alternativeName>
        <fullName>Solute carrier family 6 member 18</fullName>
    </alternativeName>
    <alternativeName>
        <fullName>System B(0) neutral amino acid transporter AT3</fullName>
    </alternativeName>
</protein>